<comment type="function">
    <text evidence="1">Catalyzes the transfer of a dimethylallyl group onto the adenine at position 37 in tRNAs that read codons beginning with uridine, leading to the formation of N6-(dimethylallyl)adenosine (i(6)A).</text>
</comment>
<comment type="catalytic activity">
    <reaction evidence="1">
        <text>adenosine(37) in tRNA + dimethylallyl diphosphate = N(6)-dimethylallyladenosine(37) in tRNA + diphosphate</text>
        <dbReference type="Rhea" id="RHEA:26482"/>
        <dbReference type="Rhea" id="RHEA-COMP:10162"/>
        <dbReference type="Rhea" id="RHEA-COMP:10375"/>
        <dbReference type="ChEBI" id="CHEBI:33019"/>
        <dbReference type="ChEBI" id="CHEBI:57623"/>
        <dbReference type="ChEBI" id="CHEBI:74411"/>
        <dbReference type="ChEBI" id="CHEBI:74415"/>
        <dbReference type="EC" id="2.5.1.75"/>
    </reaction>
</comment>
<comment type="cofactor">
    <cofactor evidence="1">
        <name>Mg(2+)</name>
        <dbReference type="ChEBI" id="CHEBI:18420"/>
    </cofactor>
</comment>
<comment type="subunit">
    <text evidence="1">Monomer.</text>
</comment>
<comment type="similarity">
    <text evidence="1">Belongs to the IPP transferase family.</text>
</comment>
<proteinExistence type="inferred from homology"/>
<evidence type="ECO:0000255" key="1">
    <source>
        <dbReference type="HAMAP-Rule" id="MF_00185"/>
    </source>
</evidence>
<dbReference type="EC" id="2.5.1.75" evidence="1"/>
<dbReference type="EMBL" id="CP000356">
    <property type="protein sequence ID" value="ABF53182.1"/>
    <property type="molecule type" value="Genomic_DNA"/>
</dbReference>
<dbReference type="SMR" id="Q1GT40"/>
<dbReference type="STRING" id="317655.Sala_1469"/>
<dbReference type="KEGG" id="sal:Sala_1469"/>
<dbReference type="eggNOG" id="COG0324">
    <property type="taxonomic scope" value="Bacteria"/>
</dbReference>
<dbReference type="HOGENOM" id="CLU_032616_0_1_5"/>
<dbReference type="Proteomes" id="UP000006578">
    <property type="component" value="Chromosome"/>
</dbReference>
<dbReference type="GO" id="GO:0005524">
    <property type="term" value="F:ATP binding"/>
    <property type="evidence" value="ECO:0007669"/>
    <property type="project" value="UniProtKB-UniRule"/>
</dbReference>
<dbReference type="GO" id="GO:0052381">
    <property type="term" value="F:tRNA dimethylallyltransferase activity"/>
    <property type="evidence" value="ECO:0007669"/>
    <property type="project" value="UniProtKB-UniRule"/>
</dbReference>
<dbReference type="GO" id="GO:0006400">
    <property type="term" value="P:tRNA modification"/>
    <property type="evidence" value="ECO:0007669"/>
    <property type="project" value="TreeGrafter"/>
</dbReference>
<dbReference type="Gene3D" id="1.10.20.140">
    <property type="match status" value="1"/>
</dbReference>
<dbReference type="Gene3D" id="3.40.50.300">
    <property type="entry name" value="P-loop containing nucleotide triphosphate hydrolases"/>
    <property type="match status" value="1"/>
</dbReference>
<dbReference type="HAMAP" id="MF_00185">
    <property type="entry name" value="IPP_trans"/>
    <property type="match status" value="1"/>
</dbReference>
<dbReference type="InterPro" id="IPR039657">
    <property type="entry name" value="Dimethylallyltransferase"/>
</dbReference>
<dbReference type="InterPro" id="IPR018022">
    <property type="entry name" value="IPT"/>
</dbReference>
<dbReference type="InterPro" id="IPR027417">
    <property type="entry name" value="P-loop_NTPase"/>
</dbReference>
<dbReference type="NCBIfam" id="TIGR00174">
    <property type="entry name" value="miaA"/>
    <property type="match status" value="1"/>
</dbReference>
<dbReference type="PANTHER" id="PTHR11088">
    <property type="entry name" value="TRNA DIMETHYLALLYLTRANSFERASE"/>
    <property type="match status" value="1"/>
</dbReference>
<dbReference type="PANTHER" id="PTHR11088:SF60">
    <property type="entry name" value="TRNA DIMETHYLALLYLTRANSFERASE"/>
    <property type="match status" value="1"/>
</dbReference>
<dbReference type="Pfam" id="PF01715">
    <property type="entry name" value="IPPT"/>
    <property type="match status" value="1"/>
</dbReference>
<dbReference type="SUPFAM" id="SSF52540">
    <property type="entry name" value="P-loop containing nucleoside triphosphate hydrolases"/>
    <property type="match status" value="1"/>
</dbReference>
<reference key="1">
    <citation type="journal article" date="2009" name="Proc. Natl. Acad. Sci. U.S.A.">
        <title>The genomic basis of trophic strategy in marine bacteria.</title>
        <authorList>
            <person name="Lauro F.M."/>
            <person name="McDougald D."/>
            <person name="Thomas T."/>
            <person name="Williams T.J."/>
            <person name="Egan S."/>
            <person name="Rice S."/>
            <person name="DeMaere M.Z."/>
            <person name="Ting L."/>
            <person name="Ertan H."/>
            <person name="Johnson J."/>
            <person name="Ferriera S."/>
            <person name="Lapidus A."/>
            <person name="Anderson I."/>
            <person name="Kyrpides N."/>
            <person name="Munk A.C."/>
            <person name="Detter C."/>
            <person name="Han C.S."/>
            <person name="Brown M.V."/>
            <person name="Robb F.T."/>
            <person name="Kjelleberg S."/>
            <person name="Cavicchioli R."/>
        </authorList>
    </citation>
    <scope>NUCLEOTIDE SEQUENCE [LARGE SCALE GENOMIC DNA]</scope>
    <source>
        <strain>DSM 13593 / LMG 18877 / RB2256</strain>
    </source>
</reference>
<gene>
    <name evidence="1" type="primary">miaA</name>
    <name type="ordered locus">Sala_1469</name>
</gene>
<feature type="chain" id="PRO_0000377330" description="tRNA dimethylallyltransferase">
    <location>
        <begin position="1"/>
        <end position="306"/>
    </location>
</feature>
<feature type="binding site" evidence="1">
    <location>
        <begin position="6"/>
        <end position="13"/>
    </location>
    <ligand>
        <name>ATP</name>
        <dbReference type="ChEBI" id="CHEBI:30616"/>
    </ligand>
</feature>
<feature type="binding site" evidence="1">
    <location>
        <begin position="8"/>
        <end position="13"/>
    </location>
    <ligand>
        <name>substrate</name>
    </ligand>
</feature>
<feature type="site" description="Interaction with substrate tRNA" evidence="1">
    <location>
        <position position="98"/>
    </location>
</feature>
<feature type="site" description="Interaction with substrate tRNA" evidence="1">
    <location>
        <position position="120"/>
    </location>
</feature>
<accession>Q1GT40</accession>
<keyword id="KW-0067">ATP-binding</keyword>
<keyword id="KW-0460">Magnesium</keyword>
<keyword id="KW-0547">Nucleotide-binding</keyword>
<keyword id="KW-1185">Reference proteome</keyword>
<keyword id="KW-0808">Transferase</keyword>
<keyword id="KW-0819">tRNA processing</keyword>
<protein>
    <recommendedName>
        <fullName evidence="1">tRNA dimethylallyltransferase</fullName>
        <ecNumber evidence="1">2.5.1.75</ecNumber>
    </recommendedName>
    <alternativeName>
        <fullName evidence="1">Dimethylallyl diphosphate:tRNA dimethylallyltransferase</fullName>
        <shortName evidence="1">DMAPP:tRNA dimethylallyltransferase</shortName>
        <shortName evidence="1">DMATase</shortName>
    </alternativeName>
    <alternativeName>
        <fullName evidence="1">Isopentenyl-diphosphate:tRNA isopentenyltransferase</fullName>
        <shortName evidence="1">IPP transferase</shortName>
        <shortName evidence="1">IPPT</shortName>
        <shortName evidence="1">IPTase</shortName>
    </alternativeName>
</protein>
<sequence>MALIAGPTASGKSALAVALAKALGNGTVVNADASQVYADLAILSARPTDDEMQGVPHRLFGHVDGSQAHNAARWADEAQGVIAQAHAAGRVPILVGGTGLYLRTLLYGIAPVPEIDPHIREAVRALPVAQAHAALAEADPAAAARLGPADTTRVARALEVVRSTGRTLASWQQAREGGIADRVALAPLVLLPPRDWLRDRCDVRLVEMFDGGAIDEVEALLARGLDPDLPVMRAIGVPQIAAFLDGTASRDEALAAAQAATRQYAKRQFTWFRHQPPASWPRHIESLSIDIIDNLAIKLRETVLTR</sequence>
<name>MIAA_SPHAL</name>
<organism>
    <name type="scientific">Sphingopyxis alaskensis (strain DSM 13593 / LMG 18877 / RB2256)</name>
    <name type="common">Sphingomonas alaskensis</name>
    <dbReference type="NCBI Taxonomy" id="317655"/>
    <lineage>
        <taxon>Bacteria</taxon>
        <taxon>Pseudomonadati</taxon>
        <taxon>Pseudomonadota</taxon>
        <taxon>Alphaproteobacteria</taxon>
        <taxon>Sphingomonadales</taxon>
        <taxon>Sphingomonadaceae</taxon>
        <taxon>Sphingopyxis</taxon>
    </lineage>
</organism>